<feature type="chain" id="PRO_1000061470" description="DNA gyrase inhibitor YacG">
    <location>
        <begin position="1"/>
        <end position="68"/>
    </location>
</feature>
<feature type="region of interest" description="Disordered" evidence="2">
    <location>
        <begin position="45"/>
        <end position="68"/>
    </location>
</feature>
<feature type="compositionally biased region" description="Acidic residues" evidence="2">
    <location>
        <begin position="53"/>
        <end position="68"/>
    </location>
</feature>
<feature type="binding site" evidence="1">
    <location>
        <position position="10"/>
    </location>
    <ligand>
        <name>Zn(2+)</name>
        <dbReference type="ChEBI" id="CHEBI:29105"/>
    </ligand>
</feature>
<feature type="binding site" evidence="1">
    <location>
        <position position="13"/>
    </location>
    <ligand>
        <name>Zn(2+)</name>
        <dbReference type="ChEBI" id="CHEBI:29105"/>
    </ligand>
</feature>
<feature type="binding site" evidence="1">
    <location>
        <position position="29"/>
    </location>
    <ligand>
        <name>Zn(2+)</name>
        <dbReference type="ChEBI" id="CHEBI:29105"/>
    </ligand>
</feature>
<feature type="binding site" evidence="1">
    <location>
        <position position="33"/>
    </location>
    <ligand>
        <name>Zn(2+)</name>
        <dbReference type="ChEBI" id="CHEBI:29105"/>
    </ligand>
</feature>
<organism>
    <name type="scientific">Yersinia pseudotuberculosis serotype O:1b (strain IP 31758)</name>
    <dbReference type="NCBI Taxonomy" id="349747"/>
    <lineage>
        <taxon>Bacteria</taxon>
        <taxon>Pseudomonadati</taxon>
        <taxon>Pseudomonadota</taxon>
        <taxon>Gammaproteobacteria</taxon>
        <taxon>Enterobacterales</taxon>
        <taxon>Yersiniaceae</taxon>
        <taxon>Yersinia</taxon>
    </lineage>
</organism>
<evidence type="ECO:0000255" key="1">
    <source>
        <dbReference type="HAMAP-Rule" id="MF_00649"/>
    </source>
</evidence>
<evidence type="ECO:0000256" key="2">
    <source>
        <dbReference type="SAM" id="MobiDB-lite"/>
    </source>
</evidence>
<protein>
    <recommendedName>
        <fullName evidence="1">DNA gyrase inhibitor YacG</fullName>
    </recommendedName>
</protein>
<keyword id="KW-0479">Metal-binding</keyword>
<keyword id="KW-0862">Zinc</keyword>
<gene>
    <name evidence="1" type="primary">yacG</name>
    <name type="ordered locus">YpsIP31758_3376</name>
</gene>
<comment type="function">
    <text evidence="1">Inhibits all the catalytic activities of DNA gyrase by preventing its interaction with DNA. Acts by binding directly to the C-terminal domain of GyrB, which probably disrupts DNA binding by the gyrase.</text>
</comment>
<comment type="cofactor">
    <cofactor evidence="1">
        <name>Zn(2+)</name>
        <dbReference type="ChEBI" id="CHEBI:29105"/>
    </cofactor>
    <text evidence="1">Binds 1 zinc ion.</text>
</comment>
<comment type="subunit">
    <text evidence="1">Interacts with GyrB.</text>
</comment>
<comment type="similarity">
    <text evidence="1">Belongs to the DNA gyrase inhibitor YacG family.</text>
</comment>
<name>YACG_YERP3</name>
<accession>A7FM55</accession>
<reference key="1">
    <citation type="journal article" date="2007" name="PLoS Genet.">
        <title>The complete genome sequence of Yersinia pseudotuberculosis IP31758, the causative agent of Far East scarlet-like fever.</title>
        <authorList>
            <person name="Eppinger M."/>
            <person name="Rosovitz M.J."/>
            <person name="Fricke W.F."/>
            <person name="Rasko D.A."/>
            <person name="Kokorina G."/>
            <person name="Fayolle C."/>
            <person name="Lindler L.E."/>
            <person name="Carniel E."/>
            <person name="Ravel J."/>
        </authorList>
    </citation>
    <scope>NUCLEOTIDE SEQUENCE [LARGE SCALE GENOMIC DNA]</scope>
    <source>
        <strain>IP 31758</strain>
    </source>
</reference>
<proteinExistence type="inferred from homology"/>
<dbReference type="EMBL" id="CP000720">
    <property type="protein sequence ID" value="ABS47067.1"/>
    <property type="molecule type" value="Genomic_DNA"/>
</dbReference>
<dbReference type="RefSeq" id="WP_002209317.1">
    <property type="nucleotide sequence ID" value="NC_009708.1"/>
</dbReference>
<dbReference type="SMR" id="A7FM55"/>
<dbReference type="GeneID" id="57975278"/>
<dbReference type="KEGG" id="ypi:YpsIP31758_3376"/>
<dbReference type="HOGENOM" id="CLU_178280_3_1_6"/>
<dbReference type="Proteomes" id="UP000002412">
    <property type="component" value="Chromosome"/>
</dbReference>
<dbReference type="GO" id="GO:0008657">
    <property type="term" value="F:DNA topoisomerase type II (double strand cut, ATP-hydrolyzing) inhibitor activity"/>
    <property type="evidence" value="ECO:0007669"/>
    <property type="project" value="UniProtKB-UniRule"/>
</dbReference>
<dbReference type="GO" id="GO:0008270">
    <property type="term" value="F:zinc ion binding"/>
    <property type="evidence" value="ECO:0007669"/>
    <property type="project" value="UniProtKB-UniRule"/>
</dbReference>
<dbReference type="GO" id="GO:0006355">
    <property type="term" value="P:regulation of DNA-templated transcription"/>
    <property type="evidence" value="ECO:0007669"/>
    <property type="project" value="InterPro"/>
</dbReference>
<dbReference type="Gene3D" id="3.30.50.10">
    <property type="entry name" value="Erythroid Transcription Factor GATA-1, subunit A"/>
    <property type="match status" value="1"/>
</dbReference>
<dbReference type="HAMAP" id="MF_00649">
    <property type="entry name" value="DNA_gyrase_inhibitor_YacG"/>
    <property type="match status" value="1"/>
</dbReference>
<dbReference type="InterPro" id="IPR005584">
    <property type="entry name" value="DNA_gyrase_inhibitor_YacG"/>
</dbReference>
<dbReference type="InterPro" id="IPR013088">
    <property type="entry name" value="Znf_NHR/GATA"/>
</dbReference>
<dbReference type="NCBIfam" id="NF001638">
    <property type="entry name" value="PRK00418.1"/>
    <property type="match status" value="1"/>
</dbReference>
<dbReference type="PANTHER" id="PTHR36150">
    <property type="entry name" value="DNA GYRASE INHIBITOR YACG"/>
    <property type="match status" value="1"/>
</dbReference>
<dbReference type="PANTHER" id="PTHR36150:SF1">
    <property type="entry name" value="DNA GYRASE INHIBITOR YACG"/>
    <property type="match status" value="1"/>
</dbReference>
<dbReference type="Pfam" id="PF03884">
    <property type="entry name" value="YacG"/>
    <property type="match status" value="1"/>
</dbReference>
<dbReference type="SUPFAM" id="SSF57716">
    <property type="entry name" value="Glucocorticoid receptor-like (DNA-binding domain)"/>
    <property type="match status" value="1"/>
</dbReference>
<sequence>MESEQIQVNCPTCGKVVIWGEQSPFRPFCCKRCQLIDLGEWADEEKRIPSDTELSDSDEWSEEDPLKH</sequence>